<proteinExistence type="evidence at protein level"/>
<reference key="1">
    <citation type="journal article" date="2009" name="Nat. Biotechnol.">
        <title>Genome sequence of the recombinant protein production host Pichia pastoris.</title>
        <authorList>
            <person name="De Schutter K."/>
            <person name="Lin Y.-C."/>
            <person name="Tiels P."/>
            <person name="Van Hecke A."/>
            <person name="Glinka S."/>
            <person name="Weber-Lehmann J."/>
            <person name="Rouze P."/>
            <person name="Van de Peer Y."/>
            <person name="Callewaert N."/>
        </authorList>
    </citation>
    <scope>NUCLEOTIDE SEQUENCE [LARGE SCALE GENOMIC DNA]</scope>
    <source>
        <strain>GS115 / ATCC 20864</strain>
    </source>
</reference>
<reference key="2">
    <citation type="journal article" date="2008" name="Dev. Cell">
        <title>PpAtg30 tags peroxisomes for turnover by selective autophagy.</title>
        <authorList>
            <person name="Farre J.C."/>
            <person name="Manjithaya R."/>
            <person name="Mathewson R.D."/>
            <person name="Subramani S."/>
        </authorList>
    </citation>
    <scope>SUBCELLULAR LOCATION</scope>
    <scope>FUNCTION</scope>
    <scope>PHOSPHORYLATION AT SER-112</scope>
    <scope>MUTAGENESIS OF SER-112</scope>
    <scope>INTERACTION WITH ATG11; ATG17; PEX3 AND PEX14</scope>
</reference>
<reference key="3">
    <citation type="journal article" date="2009" name="Mol. Biol. Cell">
        <title>Peroxisome size provides insights into the function of autophagy-related proteins.</title>
        <authorList>
            <person name="Nazarko T.Y."/>
            <person name="Farre J.C."/>
            <person name="Subramani S."/>
        </authorList>
    </citation>
    <scope>FUNCTION</scope>
    <scope>INTERACTION WITH ATG11 AND ATG17</scope>
</reference>
<reference key="4">
    <citation type="journal article" date="2014" name="J. Cell Biol.">
        <title>Peroxisomal Atg37 binds Atg30 or palmitoyl-CoA to regulate phagophore formation during pexophagy.</title>
        <authorList>
            <person name="Nazarko T.Y."/>
            <person name="Ozeki K."/>
            <person name="Till A."/>
            <person name="Ramakrishnan G."/>
            <person name="Lotfi P."/>
            <person name="Yan M."/>
            <person name="Subramani S."/>
        </authorList>
    </citation>
    <scope>SUBCELLULAR LOCATION</scope>
    <scope>INTERACTION WITH ATG37 AND PEX3</scope>
    <scope>FUNCTION</scope>
</reference>
<gene>
    <name type="primary">ATG30</name>
    <name type="ordered locus">PAS_chr3_1230</name>
</gene>
<dbReference type="EMBL" id="FN392321">
    <property type="protein sequence ID" value="CAY70917.1"/>
    <property type="molecule type" value="Genomic_DNA"/>
</dbReference>
<dbReference type="RefSeq" id="XP_002493096.1">
    <property type="nucleotide sequence ID" value="XM_002493051.1"/>
</dbReference>
<dbReference type="STRING" id="644223.C4R5T1"/>
<dbReference type="iPTMnet" id="C4R5T1"/>
<dbReference type="EnsemblFungi" id="CAY70917">
    <property type="protein sequence ID" value="CAY70917"/>
    <property type="gene ID" value="PAS_chr3_1230"/>
</dbReference>
<dbReference type="GeneID" id="8200351"/>
<dbReference type="KEGG" id="ppa:PAS_chr3_1230"/>
<dbReference type="eggNOG" id="ENOG502STYG">
    <property type="taxonomic scope" value="Eukaryota"/>
</dbReference>
<dbReference type="HOGENOM" id="CLU_754524_0_0_1"/>
<dbReference type="InParanoid" id="C4R5T1"/>
<dbReference type="OMA" id="PVMETHY"/>
<dbReference type="OrthoDB" id="3992524at2759"/>
<dbReference type="Proteomes" id="UP000000314">
    <property type="component" value="Chromosome 3"/>
</dbReference>
<dbReference type="GO" id="GO:0005778">
    <property type="term" value="C:peroxisomal membrane"/>
    <property type="evidence" value="ECO:0007669"/>
    <property type="project" value="UniProtKB-SubCell"/>
</dbReference>
<dbReference type="GO" id="GO:0000407">
    <property type="term" value="C:phagophore assembly site"/>
    <property type="evidence" value="ECO:0007669"/>
    <property type="project" value="UniProtKB-SubCell"/>
</dbReference>
<dbReference type="GO" id="GO:0005775">
    <property type="term" value="C:vacuolar lumen"/>
    <property type="evidence" value="ECO:0007669"/>
    <property type="project" value="UniProtKB-SubCell"/>
</dbReference>
<dbReference type="GO" id="GO:0006914">
    <property type="term" value="P:autophagy"/>
    <property type="evidence" value="ECO:0007669"/>
    <property type="project" value="UniProtKB-KW"/>
</dbReference>
<dbReference type="GO" id="GO:0015031">
    <property type="term" value="P:protein transport"/>
    <property type="evidence" value="ECO:0007669"/>
    <property type="project" value="UniProtKB-KW"/>
</dbReference>
<comment type="function">
    <text evidence="2 3 4">Acts as the peroxisome receptor for pexophagy. Required for both micropexophagy and macropexophagy, but not for the cytoplasm to vacuole transport (Cvt) or autophagy pathways. Required for functional micropexophagic apparatus (MIPA) and relocation of ATG11 to the peroxisome-sequestering arms of the vacuole.</text>
</comment>
<comment type="subunit">
    <text evidence="2 3 4">Interacts with ATG11, ATG17, ATG37, PEX3 and PEX14.</text>
</comment>
<comment type="subcellular location">
    <subcellularLocation>
        <location>Vacuole lumen</location>
    </subcellularLocation>
    <subcellularLocation>
        <location>Preautophagosomal structure</location>
    </subcellularLocation>
    <subcellularLocation>
        <location>Peroxisome membrane</location>
        <topology>Peripheral membrane protein</topology>
    </subcellularLocation>
    <text>Surrounds the peroxisome cluster, but a small amount is also inside the vacuole in methanol-grown cells. Upon induction of micropexophagy, localizes inside the vacuolar lumen. Also localizes near peroxisomes during early stages of micropexophagy.</text>
</comment>
<comment type="PTM">
    <text evidence="2">Phosphorylation at Ser-112 is required for micro- and macropexophagy.</text>
</comment>
<sequence length="384" mass="44298">MFSRKQVQKRNNELSSLHCSNSSNSLNRIHKNEETAKGTVGVNARGNNRSDNVASPGQLRPRTSSILTDNSEWILFSPENAEGEYVITSSDGIRRTNSNHYYYNYNEDDILSSSRRSSEDVYDAEQEYTEQPVNNHVQVEDEEDDDSIINDLTHVVDDYDYEEEDDKQDLTTRIDNWRKKQVSELLNELNHDDDLDPVLNRDKIDLIQSWGIENEKLNTKPRAKKRQRKSKRASFYGQDLLSKYSMEDLKIIKQIVAQLRDDLDKVKHDKPSSPLPNYHNTLKQAPSSNSQNPSFISYYSNYLTKNNSQQTPNSQSTSGSLLNNPNLEKYLPLFLKNLLYEDSNGSHQHPETSEKEHFWDNDLKSVNSSILTLSSNSKLKQEIL</sequence>
<protein>
    <recommendedName>
        <fullName>Autophagy-related protein 30</fullName>
    </recommendedName>
</protein>
<keyword id="KW-0072">Autophagy</keyword>
<keyword id="KW-0472">Membrane</keyword>
<keyword id="KW-0576">Peroxisome</keyword>
<keyword id="KW-0597">Phosphoprotein</keyword>
<keyword id="KW-0653">Protein transport</keyword>
<keyword id="KW-1185">Reference proteome</keyword>
<keyword id="KW-0813">Transport</keyword>
<keyword id="KW-0926">Vacuole</keyword>
<accession>C4R5T1</accession>
<feature type="chain" id="PRO_0000422169" description="Autophagy-related protein 30">
    <location>
        <begin position="1"/>
        <end position="384"/>
    </location>
</feature>
<feature type="region of interest" description="Disordered" evidence="1">
    <location>
        <begin position="1"/>
        <end position="63"/>
    </location>
</feature>
<feature type="region of interest" description="Disordered" evidence="1">
    <location>
        <begin position="266"/>
        <end position="291"/>
    </location>
</feature>
<feature type="compositionally biased region" description="Low complexity" evidence="1">
    <location>
        <begin position="13"/>
        <end position="27"/>
    </location>
</feature>
<feature type="compositionally biased region" description="Polar residues" evidence="1">
    <location>
        <begin position="45"/>
        <end position="63"/>
    </location>
</feature>
<feature type="compositionally biased region" description="Polar residues" evidence="1">
    <location>
        <begin position="278"/>
        <end position="291"/>
    </location>
</feature>
<feature type="modified residue" description="Phosphoserine" evidence="2">
    <location>
        <position position="112"/>
    </location>
</feature>
<feature type="mutagenesis site" description="Blocks pexophagy." evidence="2">
    <original>S</original>
    <variation>A</variation>
    <location>
        <position position="112"/>
    </location>
</feature>
<evidence type="ECO:0000256" key="1">
    <source>
        <dbReference type="SAM" id="MobiDB-lite"/>
    </source>
</evidence>
<evidence type="ECO:0000269" key="2">
    <source>
    </source>
</evidence>
<evidence type="ECO:0000269" key="3">
    <source>
    </source>
</evidence>
<evidence type="ECO:0000269" key="4">
    <source>
    </source>
</evidence>
<name>ATG30_KOMPG</name>
<organism>
    <name type="scientific">Komagataella phaffii (strain GS115 / ATCC 20864)</name>
    <name type="common">Yeast</name>
    <name type="synonym">Pichia pastoris</name>
    <dbReference type="NCBI Taxonomy" id="644223"/>
    <lineage>
        <taxon>Eukaryota</taxon>
        <taxon>Fungi</taxon>
        <taxon>Dikarya</taxon>
        <taxon>Ascomycota</taxon>
        <taxon>Saccharomycotina</taxon>
        <taxon>Pichiomycetes</taxon>
        <taxon>Pichiales</taxon>
        <taxon>Pichiaceae</taxon>
        <taxon>Komagataella</taxon>
    </lineage>
</organism>